<feature type="chain" id="PRO_0000168703" description="Uncharacterized protein YbgE">
    <location>
        <begin position="1"/>
        <end position="97"/>
    </location>
</feature>
<gene>
    <name type="primary">ybgE</name>
    <name type="ordered locus">Z0903</name>
    <name type="ordered locus">ECs0770</name>
</gene>
<name>YBGE_ECO57</name>
<keyword id="KW-1185">Reference proteome</keyword>
<organism>
    <name type="scientific">Escherichia coli O157:H7</name>
    <dbReference type="NCBI Taxonomy" id="83334"/>
    <lineage>
        <taxon>Bacteria</taxon>
        <taxon>Pseudomonadati</taxon>
        <taxon>Pseudomonadota</taxon>
        <taxon>Gammaproteobacteria</taxon>
        <taxon>Enterobacterales</taxon>
        <taxon>Enterobacteriaceae</taxon>
        <taxon>Escherichia</taxon>
    </lineage>
</organism>
<sequence length="97" mass="10932">MSKIIATLYAVMDKRPLRALSFVMALLLAGCMFWDPSRFAAKTSELEIWHGLLLMWAVCAGVIHGVGFRPQKVLWQGIFCPLLADIVLIVGLIFFFF</sequence>
<reference key="1">
    <citation type="journal article" date="2001" name="Nature">
        <title>Genome sequence of enterohaemorrhagic Escherichia coli O157:H7.</title>
        <authorList>
            <person name="Perna N.T."/>
            <person name="Plunkett G. III"/>
            <person name="Burland V."/>
            <person name="Mau B."/>
            <person name="Glasner J.D."/>
            <person name="Rose D.J."/>
            <person name="Mayhew G.F."/>
            <person name="Evans P.S."/>
            <person name="Gregor J."/>
            <person name="Kirkpatrick H.A."/>
            <person name="Posfai G."/>
            <person name="Hackett J."/>
            <person name="Klink S."/>
            <person name="Boutin A."/>
            <person name="Shao Y."/>
            <person name="Miller L."/>
            <person name="Grotbeck E.J."/>
            <person name="Davis N.W."/>
            <person name="Lim A."/>
            <person name="Dimalanta E.T."/>
            <person name="Potamousis K."/>
            <person name="Apodaca J."/>
            <person name="Anantharaman T.S."/>
            <person name="Lin J."/>
            <person name="Yen G."/>
            <person name="Schwartz D.C."/>
            <person name="Welch R.A."/>
            <person name="Blattner F.R."/>
        </authorList>
    </citation>
    <scope>NUCLEOTIDE SEQUENCE [LARGE SCALE GENOMIC DNA]</scope>
    <source>
        <strain>O157:H7 / EDL933 / ATCC 700927 / EHEC</strain>
    </source>
</reference>
<reference key="2">
    <citation type="journal article" date="2001" name="DNA Res.">
        <title>Complete genome sequence of enterohemorrhagic Escherichia coli O157:H7 and genomic comparison with a laboratory strain K-12.</title>
        <authorList>
            <person name="Hayashi T."/>
            <person name="Makino K."/>
            <person name="Ohnishi M."/>
            <person name="Kurokawa K."/>
            <person name="Ishii K."/>
            <person name="Yokoyama K."/>
            <person name="Han C.-G."/>
            <person name="Ohtsubo E."/>
            <person name="Nakayama K."/>
            <person name="Murata T."/>
            <person name="Tanaka M."/>
            <person name="Tobe T."/>
            <person name="Iida T."/>
            <person name="Takami H."/>
            <person name="Honda T."/>
            <person name="Sasakawa C."/>
            <person name="Ogasawara N."/>
            <person name="Yasunaga T."/>
            <person name="Kuhara S."/>
            <person name="Shiba T."/>
            <person name="Hattori M."/>
            <person name="Shinagawa H."/>
        </authorList>
    </citation>
    <scope>NUCLEOTIDE SEQUENCE [LARGE SCALE GENOMIC DNA]</scope>
    <source>
        <strain>O157:H7 / Sakai / RIMD 0509952 / EHEC</strain>
    </source>
</reference>
<dbReference type="EMBL" id="AE005174">
    <property type="protein sequence ID" value="AAG55071.1"/>
    <property type="molecule type" value="Genomic_DNA"/>
</dbReference>
<dbReference type="EMBL" id="BA000007">
    <property type="protein sequence ID" value="BAB34193.1"/>
    <property type="molecule type" value="Genomic_DNA"/>
</dbReference>
<dbReference type="PIR" id="B90725">
    <property type="entry name" value="B90725"/>
</dbReference>
<dbReference type="PIR" id="C85576">
    <property type="entry name" value="C85576"/>
</dbReference>
<dbReference type="RefSeq" id="NP_308797.1">
    <property type="nucleotide sequence ID" value="NC_002695.1"/>
</dbReference>
<dbReference type="RefSeq" id="WP_000034602.1">
    <property type="nucleotide sequence ID" value="NZ_VOAI01000019.1"/>
</dbReference>
<dbReference type="SMR" id="P0AAV2"/>
<dbReference type="STRING" id="155864.Z0903"/>
<dbReference type="GeneID" id="917502"/>
<dbReference type="GeneID" id="93776749"/>
<dbReference type="KEGG" id="ece:Z0903"/>
<dbReference type="KEGG" id="ecs:ECs_0770"/>
<dbReference type="PATRIC" id="fig|386585.9.peg.889"/>
<dbReference type="eggNOG" id="COG3790">
    <property type="taxonomic scope" value="Bacteria"/>
</dbReference>
<dbReference type="HOGENOM" id="CLU_156555_2_0_6"/>
<dbReference type="OMA" id="GCVFWDP"/>
<dbReference type="Proteomes" id="UP000000558">
    <property type="component" value="Chromosome"/>
</dbReference>
<dbReference type="Proteomes" id="UP000002519">
    <property type="component" value="Chromosome"/>
</dbReference>
<dbReference type="InterPro" id="IPR011846">
    <property type="entry name" value="Cyd_oper_YbgE"/>
</dbReference>
<dbReference type="NCBIfam" id="TIGR02112">
    <property type="entry name" value="cyd_oper_ybgE"/>
    <property type="match status" value="1"/>
</dbReference>
<dbReference type="NCBIfam" id="NF007881">
    <property type="entry name" value="PRK10588.1"/>
    <property type="match status" value="1"/>
</dbReference>
<dbReference type="Pfam" id="PF09600">
    <property type="entry name" value="Cyd_oper_YbgE"/>
    <property type="match status" value="1"/>
</dbReference>
<dbReference type="PROSITE" id="PS51257">
    <property type="entry name" value="PROKAR_LIPOPROTEIN"/>
    <property type="match status" value="1"/>
</dbReference>
<protein>
    <recommendedName>
        <fullName>Uncharacterized protein YbgE</fullName>
    </recommendedName>
</protein>
<accession>P0AAV2</accession>
<accession>P37343</accession>
<accession>P75755</accession>
<proteinExistence type="predicted"/>